<proteinExistence type="evidence at transcript level"/>
<accession>O80626</accession>
<evidence type="ECO:0000303" key="1">
    <source>
    </source>
</evidence>
<evidence type="ECO:0000305" key="2"/>
<name>RL352_ARATH</name>
<organism>
    <name type="scientific">Arabidopsis thaliana</name>
    <name type="common">Mouse-ear cress</name>
    <dbReference type="NCBI Taxonomy" id="3702"/>
    <lineage>
        <taxon>Eukaryota</taxon>
        <taxon>Viridiplantae</taxon>
        <taxon>Streptophyta</taxon>
        <taxon>Embryophyta</taxon>
        <taxon>Tracheophyta</taxon>
        <taxon>Spermatophyta</taxon>
        <taxon>Magnoliopsida</taxon>
        <taxon>eudicotyledons</taxon>
        <taxon>Gunneridae</taxon>
        <taxon>Pentapetalae</taxon>
        <taxon>rosids</taxon>
        <taxon>malvids</taxon>
        <taxon>Brassicales</taxon>
        <taxon>Brassicaceae</taxon>
        <taxon>Camelineae</taxon>
        <taxon>Arabidopsis</taxon>
    </lineage>
</organism>
<keyword id="KW-1185">Reference proteome</keyword>
<keyword id="KW-0687">Ribonucleoprotein</keyword>
<keyword id="KW-0689">Ribosomal protein</keyword>
<reference key="1">
    <citation type="journal article" date="1999" name="Nature">
        <title>Sequence and analysis of chromosome 2 of the plant Arabidopsis thaliana.</title>
        <authorList>
            <person name="Lin X."/>
            <person name="Kaul S."/>
            <person name="Rounsley S.D."/>
            <person name="Shea T.P."/>
            <person name="Benito M.-I."/>
            <person name="Town C.D."/>
            <person name="Fujii C.Y."/>
            <person name="Mason T.M."/>
            <person name="Bowman C.L."/>
            <person name="Barnstead M.E."/>
            <person name="Feldblyum T.V."/>
            <person name="Buell C.R."/>
            <person name="Ketchum K.A."/>
            <person name="Lee J.J."/>
            <person name="Ronning C.M."/>
            <person name="Koo H.L."/>
            <person name="Moffat K.S."/>
            <person name="Cronin L.A."/>
            <person name="Shen M."/>
            <person name="Pai G."/>
            <person name="Van Aken S."/>
            <person name="Umayam L."/>
            <person name="Tallon L.J."/>
            <person name="Gill J.E."/>
            <person name="Adams M.D."/>
            <person name="Carrera A.J."/>
            <person name="Creasy T.H."/>
            <person name="Goodman H.M."/>
            <person name="Somerville C.R."/>
            <person name="Copenhaver G.P."/>
            <person name="Preuss D."/>
            <person name="Nierman W.C."/>
            <person name="White O."/>
            <person name="Eisen J.A."/>
            <person name="Salzberg S.L."/>
            <person name="Fraser C.M."/>
            <person name="Venter J.C."/>
        </authorList>
    </citation>
    <scope>NUCLEOTIDE SEQUENCE [LARGE SCALE GENOMIC DNA]</scope>
    <source>
        <strain>cv. Columbia</strain>
    </source>
</reference>
<reference key="2">
    <citation type="journal article" date="2017" name="Plant J.">
        <title>Araport11: a complete reannotation of the Arabidopsis thaliana reference genome.</title>
        <authorList>
            <person name="Cheng C.Y."/>
            <person name="Krishnakumar V."/>
            <person name="Chan A.P."/>
            <person name="Thibaud-Nissen F."/>
            <person name="Schobel S."/>
            <person name="Town C.D."/>
        </authorList>
    </citation>
    <scope>GENOME REANNOTATION</scope>
    <source>
        <strain>cv. Columbia</strain>
    </source>
</reference>
<reference key="3">
    <citation type="journal article" date="2003" name="Science">
        <title>Empirical analysis of transcriptional activity in the Arabidopsis genome.</title>
        <authorList>
            <person name="Yamada K."/>
            <person name="Lim J."/>
            <person name="Dale J.M."/>
            <person name="Chen H."/>
            <person name="Shinn P."/>
            <person name="Palm C.J."/>
            <person name="Southwick A.M."/>
            <person name="Wu H.C."/>
            <person name="Kim C.J."/>
            <person name="Nguyen M."/>
            <person name="Pham P.K."/>
            <person name="Cheuk R.F."/>
            <person name="Karlin-Newmann G."/>
            <person name="Liu S.X."/>
            <person name="Lam B."/>
            <person name="Sakano H."/>
            <person name="Wu T."/>
            <person name="Yu G."/>
            <person name="Miranda M."/>
            <person name="Quach H.L."/>
            <person name="Tripp M."/>
            <person name="Chang C.H."/>
            <person name="Lee J.M."/>
            <person name="Toriumi M.J."/>
            <person name="Chan M.M."/>
            <person name="Tang C.C."/>
            <person name="Onodera C.S."/>
            <person name="Deng J.M."/>
            <person name="Akiyama K."/>
            <person name="Ansari Y."/>
            <person name="Arakawa T."/>
            <person name="Banh J."/>
            <person name="Banno F."/>
            <person name="Bowser L."/>
            <person name="Brooks S.Y."/>
            <person name="Carninci P."/>
            <person name="Chao Q."/>
            <person name="Choy N."/>
            <person name="Enju A."/>
            <person name="Goldsmith A.D."/>
            <person name="Gurjal M."/>
            <person name="Hansen N.F."/>
            <person name="Hayashizaki Y."/>
            <person name="Johnson-Hopson C."/>
            <person name="Hsuan V.W."/>
            <person name="Iida K."/>
            <person name="Karnes M."/>
            <person name="Khan S."/>
            <person name="Koesema E."/>
            <person name="Ishida J."/>
            <person name="Jiang P.X."/>
            <person name="Jones T."/>
            <person name="Kawai J."/>
            <person name="Kamiya A."/>
            <person name="Meyers C."/>
            <person name="Nakajima M."/>
            <person name="Narusaka M."/>
            <person name="Seki M."/>
            <person name="Sakurai T."/>
            <person name="Satou M."/>
            <person name="Tamse R."/>
            <person name="Vaysberg M."/>
            <person name="Wallender E.K."/>
            <person name="Wong C."/>
            <person name="Yamamura Y."/>
            <person name="Yuan S."/>
            <person name="Shinozaki K."/>
            <person name="Davis R.W."/>
            <person name="Theologis A."/>
            <person name="Ecker J.R."/>
        </authorList>
    </citation>
    <scope>NUCLEOTIDE SEQUENCE [LARGE SCALE MRNA]</scope>
    <source>
        <strain>cv. Columbia</strain>
    </source>
</reference>
<reference key="4">
    <citation type="submission" date="2002-03" db="EMBL/GenBank/DDBJ databases">
        <title>Full-length cDNA from Arabidopsis thaliana.</title>
        <authorList>
            <person name="Brover V.V."/>
            <person name="Troukhan M.E."/>
            <person name="Alexandrov N.A."/>
            <person name="Lu Y.-P."/>
            <person name="Flavell R.B."/>
            <person name="Feldmann K.A."/>
        </authorList>
    </citation>
    <scope>NUCLEOTIDE SEQUENCE [LARGE SCALE MRNA]</scope>
</reference>
<reference key="5">
    <citation type="journal article" date="2001" name="Plant Physiol.">
        <title>The organization of cytoplasmic ribosomal protein genes in the Arabidopsis genome.</title>
        <authorList>
            <person name="Barakat A."/>
            <person name="Szick-Miranda K."/>
            <person name="Chang I.-F."/>
            <person name="Guyot R."/>
            <person name="Blanc G."/>
            <person name="Cooke R."/>
            <person name="Delseny M."/>
            <person name="Bailey-Serres J."/>
        </authorList>
    </citation>
    <scope>GENE FAMILY ORGANIZATION</scope>
    <scope>NOMENCLATURE</scope>
</reference>
<reference key="6">
    <citation type="journal article" date="2023" name="Plant Cell">
        <title>An updated nomenclature for plant ribosomal protein genes.</title>
        <authorList>
            <person name="Scarpin M.R."/>
            <person name="Busche M."/>
            <person name="Martinez R.E."/>
            <person name="Harper L.C."/>
            <person name="Reiser L."/>
            <person name="Szakonyi D."/>
            <person name="Merchante C."/>
            <person name="Lan T."/>
            <person name="Xiong W."/>
            <person name="Mo B."/>
            <person name="Tang G."/>
            <person name="Chen X."/>
            <person name="Bailey-Serres J."/>
            <person name="Browning K.S."/>
            <person name="Brunkard J.O."/>
        </authorList>
    </citation>
    <scope>NOMENCLATURE</scope>
</reference>
<comment type="similarity">
    <text evidence="2">Belongs to the universal ribosomal protein uL29 family.</text>
</comment>
<gene>
    <name type="primary">RPL35B</name>
    <name type="ordered locus">At2g39390</name>
    <name type="ORF">F12L6.5</name>
</gene>
<protein>
    <recommendedName>
        <fullName evidence="1">Large ribosomal subunit protein uL29y</fullName>
    </recommendedName>
    <alternativeName>
        <fullName>60S ribosomal protein L35-2</fullName>
    </alternativeName>
</protein>
<dbReference type="EMBL" id="AC004218">
    <property type="protein sequence ID" value="AAC27830.1"/>
    <property type="molecule type" value="Genomic_DNA"/>
</dbReference>
<dbReference type="EMBL" id="CP002685">
    <property type="protein sequence ID" value="AEC09668.1"/>
    <property type="molecule type" value="Genomic_DNA"/>
</dbReference>
<dbReference type="EMBL" id="AY035104">
    <property type="protein sequence ID" value="AAK59609.1"/>
    <property type="molecule type" value="mRNA"/>
</dbReference>
<dbReference type="EMBL" id="AY063036">
    <property type="protein sequence ID" value="AAL34210.1"/>
    <property type="molecule type" value="mRNA"/>
</dbReference>
<dbReference type="EMBL" id="AY084718">
    <property type="protein sequence ID" value="AAM61292.1"/>
    <property type="molecule type" value="mRNA"/>
</dbReference>
<dbReference type="PIR" id="T00549">
    <property type="entry name" value="T00549"/>
</dbReference>
<dbReference type="RefSeq" id="NP_181471.1">
    <property type="nucleotide sequence ID" value="NM_129496.3"/>
</dbReference>
<dbReference type="SMR" id="O80626"/>
<dbReference type="BioGRID" id="3862">
    <property type="interactions" value="106"/>
</dbReference>
<dbReference type="FunCoup" id="O80626">
    <property type="interactions" value="2969"/>
</dbReference>
<dbReference type="IntAct" id="O80626">
    <property type="interactions" value="1"/>
</dbReference>
<dbReference type="STRING" id="3702.O80626"/>
<dbReference type="PaxDb" id="3702-AT2G39390.1"/>
<dbReference type="ProteomicsDB" id="226842"/>
<dbReference type="EnsemblPlants" id="AT2G39390.1">
    <property type="protein sequence ID" value="AT2G39390.1"/>
    <property type="gene ID" value="AT2G39390"/>
</dbReference>
<dbReference type="GeneID" id="818524"/>
<dbReference type="Gramene" id="AT2G39390.1">
    <property type="protein sequence ID" value="AT2G39390.1"/>
    <property type="gene ID" value="AT2G39390"/>
</dbReference>
<dbReference type="KEGG" id="ath:AT2G39390"/>
<dbReference type="Araport" id="AT2G39390"/>
<dbReference type="TAIR" id="AT2G39390"/>
<dbReference type="eggNOG" id="KOG3436">
    <property type="taxonomic scope" value="Eukaryota"/>
</dbReference>
<dbReference type="HOGENOM" id="CLU_110381_1_1_1"/>
<dbReference type="InParanoid" id="O80626"/>
<dbReference type="OMA" id="NMANECI"/>
<dbReference type="OrthoDB" id="528635at2759"/>
<dbReference type="PhylomeDB" id="O80626"/>
<dbReference type="PRO" id="PR:O80626"/>
<dbReference type="Proteomes" id="UP000006548">
    <property type="component" value="Chromosome 2"/>
</dbReference>
<dbReference type="ExpressionAtlas" id="O80626">
    <property type="expression patterns" value="baseline and differential"/>
</dbReference>
<dbReference type="GO" id="GO:0022625">
    <property type="term" value="C:cytosolic large ribosomal subunit"/>
    <property type="evidence" value="ECO:0007005"/>
    <property type="project" value="TAIR"/>
</dbReference>
<dbReference type="GO" id="GO:0022626">
    <property type="term" value="C:cytosolic ribosome"/>
    <property type="evidence" value="ECO:0007005"/>
    <property type="project" value="TAIR"/>
</dbReference>
<dbReference type="GO" id="GO:0005794">
    <property type="term" value="C:Golgi apparatus"/>
    <property type="evidence" value="ECO:0007005"/>
    <property type="project" value="TAIR"/>
</dbReference>
<dbReference type="GO" id="GO:0003729">
    <property type="term" value="F:mRNA binding"/>
    <property type="evidence" value="ECO:0000314"/>
    <property type="project" value="TAIR"/>
</dbReference>
<dbReference type="GO" id="GO:0003735">
    <property type="term" value="F:structural constituent of ribosome"/>
    <property type="evidence" value="ECO:0000314"/>
    <property type="project" value="CAFA"/>
</dbReference>
<dbReference type="GO" id="GO:0000463">
    <property type="term" value="P:maturation of LSU-rRNA from tricistronic rRNA transcript (SSU-rRNA, 5.8S rRNA, LSU-rRNA)"/>
    <property type="evidence" value="ECO:0007669"/>
    <property type="project" value="InterPro"/>
</dbReference>
<dbReference type="GO" id="GO:0006412">
    <property type="term" value="P:translation"/>
    <property type="evidence" value="ECO:0007669"/>
    <property type="project" value="InterPro"/>
</dbReference>
<dbReference type="CDD" id="cd00427">
    <property type="entry name" value="Ribosomal_L29_HIP"/>
    <property type="match status" value="1"/>
</dbReference>
<dbReference type="FunFam" id="1.10.287.310:FF:000002">
    <property type="entry name" value="60S ribosomal protein L35"/>
    <property type="match status" value="1"/>
</dbReference>
<dbReference type="FunFam" id="6.10.250.3450:FF:000001">
    <property type="entry name" value="60S ribosomal protein L35"/>
    <property type="match status" value="1"/>
</dbReference>
<dbReference type="Gene3D" id="1.10.287.310">
    <property type="match status" value="1"/>
</dbReference>
<dbReference type="Gene3D" id="6.10.250.3450">
    <property type="match status" value="1"/>
</dbReference>
<dbReference type="HAMAP" id="MF_00374">
    <property type="entry name" value="Ribosomal_uL29"/>
    <property type="match status" value="1"/>
</dbReference>
<dbReference type="InterPro" id="IPR001854">
    <property type="entry name" value="Ribosomal_uL29"/>
</dbReference>
<dbReference type="InterPro" id="IPR018254">
    <property type="entry name" value="Ribosomal_uL29_CS"/>
</dbReference>
<dbReference type="InterPro" id="IPR045059">
    <property type="entry name" value="Ribosomal_uL29_euk"/>
</dbReference>
<dbReference type="InterPro" id="IPR036049">
    <property type="entry name" value="Ribosomal_uL29_sf"/>
</dbReference>
<dbReference type="NCBIfam" id="TIGR00012">
    <property type="entry name" value="L29"/>
    <property type="match status" value="1"/>
</dbReference>
<dbReference type="PANTHER" id="PTHR45722">
    <property type="entry name" value="60S RIBOSOMAL PROTEIN L35"/>
    <property type="match status" value="1"/>
</dbReference>
<dbReference type="PANTHER" id="PTHR45722:SF6">
    <property type="entry name" value="LARGE RIBOSOMAL SUBUNIT PROTEIN UL29W-RELATED"/>
    <property type="match status" value="1"/>
</dbReference>
<dbReference type="Pfam" id="PF00831">
    <property type="entry name" value="Ribosomal_L29"/>
    <property type="match status" value="1"/>
</dbReference>
<dbReference type="SUPFAM" id="SSF46561">
    <property type="entry name" value="Ribosomal protein L29 (L29p)"/>
    <property type="match status" value="1"/>
</dbReference>
<dbReference type="PROSITE" id="PS00579">
    <property type="entry name" value="RIBOSOMAL_L29"/>
    <property type="match status" value="1"/>
</dbReference>
<feature type="chain" id="PRO_0000130546" description="Large ribosomal subunit protein uL29y">
    <location>
        <begin position="1"/>
        <end position="123"/>
    </location>
</feature>
<sequence length="123" mass="14231">MARIKVHELREKSKADLSGQLKEFKAELALLRVAKVTGGAPNKLSKIKVVRKSIAQVLTVISQKQKSALREAYKNKKLLPLDLRPKKTRAIRRRLTKHQASLKTEREKKKEMYFPIRKYAIKV</sequence>